<gene>
    <name evidence="1" type="primary">hrcA</name>
    <name type="ordered locus">DET1401</name>
</gene>
<keyword id="KW-0678">Repressor</keyword>
<keyword id="KW-0346">Stress response</keyword>
<keyword id="KW-0804">Transcription</keyword>
<keyword id="KW-0805">Transcription regulation</keyword>
<proteinExistence type="inferred from homology"/>
<feature type="chain" id="PRO_1000010404" description="Heat-inducible transcription repressor HrcA">
    <location>
        <begin position="1"/>
        <end position="345"/>
    </location>
</feature>
<protein>
    <recommendedName>
        <fullName evidence="1">Heat-inducible transcription repressor HrcA</fullName>
    </recommendedName>
</protein>
<organism>
    <name type="scientific">Dehalococcoides mccartyi (strain ATCC BAA-2266 / KCTC 15142 / 195)</name>
    <name type="common">Dehalococcoides ethenogenes (strain 195)</name>
    <dbReference type="NCBI Taxonomy" id="243164"/>
    <lineage>
        <taxon>Bacteria</taxon>
        <taxon>Bacillati</taxon>
        <taxon>Chloroflexota</taxon>
        <taxon>Dehalococcoidia</taxon>
        <taxon>Dehalococcoidales</taxon>
        <taxon>Dehalococcoidaceae</taxon>
        <taxon>Dehalococcoides</taxon>
    </lineage>
</organism>
<sequence length="345" mass="39093">MLTPRAEIILRSIVRQYITKAVPVSSSSILEDCGLDICSATIRNEVVRLETEGYILRPHHSAGSIPADKGYRYYVESLKDVELPTNDKFLIRHLFHQVEKEMEEWLNLTVAVLSQRVQSMAVVTMPRQTQGKVHHIELVSLQDNLVLVVLILRGAKVKQQLINFENTVSQPELTLISNRLNDAYAGLTRFQIEQKTLNLNPDELKVKDSLIKMMRGEDEQESREPFFDGLHYMLEQPEFHQNQRVQEIMQLLEQKKLSKMIAPPSPFNRGVQVYIGQENASAEIRDYSLIVSQYGIPDEAVGTIGVIGPTRMAYERALSAVSYLSLVMSTLVAELYGKPPGGKDE</sequence>
<reference key="1">
    <citation type="journal article" date="2005" name="Science">
        <title>Genome sequence of the PCE-dechlorinating bacterium Dehalococcoides ethenogenes.</title>
        <authorList>
            <person name="Seshadri R."/>
            <person name="Adrian L."/>
            <person name="Fouts D.E."/>
            <person name="Eisen J.A."/>
            <person name="Phillippy A.M."/>
            <person name="Methe B.A."/>
            <person name="Ward N.L."/>
            <person name="Nelson W.C."/>
            <person name="DeBoy R.T."/>
            <person name="Khouri H.M."/>
            <person name="Kolonay J.F."/>
            <person name="Dodson R.J."/>
            <person name="Daugherty S.C."/>
            <person name="Brinkac L.M."/>
            <person name="Sullivan S.A."/>
            <person name="Madupu R."/>
            <person name="Nelson K.E."/>
            <person name="Kang K.H."/>
            <person name="Impraim M."/>
            <person name="Tran K."/>
            <person name="Robinson J.M."/>
            <person name="Forberger H.A."/>
            <person name="Fraser C.M."/>
            <person name="Zinder S.H."/>
            <person name="Heidelberg J.F."/>
        </authorList>
    </citation>
    <scope>NUCLEOTIDE SEQUENCE [LARGE SCALE GENOMIC DNA]</scope>
    <source>
        <strain>ATCC BAA-2266 / KCTC 15142 / 195</strain>
    </source>
</reference>
<comment type="function">
    <text evidence="1">Negative regulator of class I heat shock genes (grpE-dnaK-dnaJ and groELS operons). Prevents heat-shock induction of these operons.</text>
</comment>
<comment type="similarity">
    <text evidence="1">Belongs to the HrcA family.</text>
</comment>
<accession>Q3Z6N9</accession>
<evidence type="ECO:0000255" key="1">
    <source>
        <dbReference type="HAMAP-Rule" id="MF_00081"/>
    </source>
</evidence>
<dbReference type="EMBL" id="CP000027">
    <property type="protein sequence ID" value="AAW39349.1"/>
    <property type="molecule type" value="Genomic_DNA"/>
</dbReference>
<dbReference type="RefSeq" id="WP_010937087.1">
    <property type="nucleotide sequence ID" value="NC_002936.3"/>
</dbReference>
<dbReference type="SMR" id="Q3Z6N9"/>
<dbReference type="FunCoup" id="Q3Z6N9">
    <property type="interactions" value="142"/>
</dbReference>
<dbReference type="STRING" id="243164.DET1401"/>
<dbReference type="GeneID" id="3229308"/>
<dbReference type="KEGG" id="det:DET1401"/>
<dbReference type="PATRIC" id="fig|243164.10.peg.1328"/>
<dbReference type="eggNOG" id="COG1420">
    <property type="taxonomic scope" value="Bacteria"/>
</dbReference>
<dbReference type="HOGENOM" id="CLU_050019_0_0_0"/>
<dbReference type="InParanoid" id="Q3Z6N9"/>
<dbReference type="Proteomes" id="UP000008289">
    <property type="component" value="Chromosome"/>
</dbReference>
<dbReference type="GO" id="GO:0003677">
    <property type="term" value="F:DNA binding"/>
    <property type="evidence" value="ECO:0007669"/>
    <property type="project" value="InterPro"/>
</dbReference>
<dbReference type="GO" id="GO:0045892">
    <property type="term" value="P:negative regulation of DNA-templated transcription"/>
    <property type="evidence" value="ECO:0007669"/>
    <property type="project" value="UniProtKB-UniRule"/>
</dbReference>
<dbReference type="Gene3D" id="3.30.450.40">
    <property type="match status" value="1"/>
</dbReference>
<dbReference type="Gene3D" id="3.30.390.60">
    <property type="entry name" value="Heat-inducible transcription repressor hrca homolog, domain 3"/>
    <property type="match status" value="1"/>
</dbReference>
<dbReference type="Gene3D" id="1.10.10.10">
    <property type="entry name" value="Winged helix-like DNA-binding domain superfamily/Winged helix DNA-binding domain"/>
    <property type="match status" value="1"/>
</dbReference>
<dbReference type="HAMAP" id="MF_00081">
    <property type="entry name" value="HrcA"/>
    <property type="match status" value="1"/>
</dbReference>
<dbReference type="InterPro" id="IPR029016">
    <property type="entry name" value="GAF-like_dom_sf"/>
</dbReference>
<dbReference type="InterPro" id="IPR002571">
    <property type="entry name" value="HrcA"/>
</dbReference>
<dbReference type="InterPro" id="IPR021153">
    <property type="entry name" value="HrcA_C"/>
</dbReference>
<dbReference type="InterPro" id="IPR036388">
    <property type="entry name" value="WH-like_DNA-bd_sf"/>
</dbReference>
<dbReference type="InterPro" id="IPR036390">
    <property type="entry name" value="WH_DNA-bd_sf"/>
</dbReference>
<dbReference type="InterPro" id="IPR023120">
    <property type="entry name" value="WHTH_transcript_rep_HrcA_IDD"/>
</dbReference>
<dbReference type="NCBIfam" id="TIGR00331">
    <property type="entry name" value="hrcA"/>
    <property type="match status" value="1"/>
</dbReference>
<dbReference type="PANTHER" id="PTHR34824">
    <property type="entry name" value="HEAT-INDUCIBLE TRANSCRIPTION REPRESSOR HRCA"/>
    <property type="match status" value="1"/>
</dbReference>
<dbReference type="PANTHER" id="PTHR34824:SF1">
    <property type="entry name" value="HEAT-INDUCIBLE TRANSCRIPTION REPRESSOR HRCA"/>
    <property type="match status" value="1"/>
</dbReference>
<dbReference type="Pfam" id="PF01628">
    <property type="entry name" value="HrcA"/>
    <property type="match status" value="1"/>
</dbReference>
<dbReference type="PIRSF" id="PIRSF005485">
    <property type="entry name" value="HrcA"/>
    <property type="match status" value="1"/>
</dbReference>
<dbReference type="SUPFAM" id="SSF55781">
    <property type="entry name" value="GAF domain-like"/>
    <property type="match status" value="1"/>
</dbReference>
<dbReference type="SUPFAM" id="SSF46785">
    <property type="entry name" value="Winged helix' DNA-binding domain"/>
    <property type="match status" value="1"/>
</dbReference>
<name>HRCA_DEHM1</name>